<proteinExistence type="inferred from homology"/>
<accession>Q8XXL5</accession>
<sequence length="345" mass="37929">MPISPALAERIATSPKAELHIHIEGSLEPELMFALAERNGVKLPYASVDEVRAAYAFNDLQSFLDLYYAGASVLLTEQDFYDMTAAYVARAVADNVRHAEIFFDPQTHTARDVPMHVVIGGIVRALDDAERAHGFSSRLILCFLRHLSEADAFDTLEAALPYIQDPANRIIGVGLDSSERGNPPEKFARVFARCKALGLRLVAHAGEEGPAQYVIDALDILQVERIDHGVRAIDDAALVKRLAASRVALTVCPLSNEKLKVYPDLRDHSLKQLLDAGCAVTLHSDDPAYFGGYMNTNWLATFNALGLSAADAHTLARNSFEASFLPEQDKALWLNAVDIHWRAHT</sequence>
<dbReference type="EC" id="3.5.4.2" evidence="1"/>
<dbReference type="EMBL" id="AL646052">
    <property type="protein sequence ID" value="CAD15805.1"/>
    <property type="molecule type" value="Genomic_DNA"/>
</dbReference>
<dbReference type="RefSeq" id="WP_011002029.1">
    <property type="nucleotide sequence ID" value="NC_003295.1"/>
</dbReference>
<dbReference type="SMR" id="Q8XXL5"/>
<dbReference type="STRING" id="267608.RSc2098"/>
<dbReference type="EnsemblBacteria" id="CAD15805">
    <property type="protein sequence ID" value="CAD15805"/>
    <property type="gene ID" value="RSc2098"/>
</dbReference>
<dbReference type="KEGG" id="rso:RSc2098"/>
<dbReference type="eggNOG" id="COG1816">
    <property type="taxonomic scope" value="Bacteria"/>
</dbReference>
<dbReference type="HOGENOM" id="CLU_039228_7_0_4"/>
<dbReference type="Proteomes" id="UP000001436">
    <property type="component" value="Chromosome"/>
</dbReference>
<dbReference type="GO" id="GO:0005829">
    <property type="term" value="C:cytosol"/>
    <property type="evidence" value="ECO:0007669"/>
    <property type="project" value="TreeGrafter"/>
</dbReference>
<dbReference type="GO" id="GO:0000034">
    <property type="term" value="F:adenine deaminase activity"/>
    <property type="evidence" value="ECO:0007669"/>
    <property type="project" value="UniProtKB-UniRule"/>
</dbReference>
<dbReference type="GO" id="GO:0008270">
    <property type="term" value="F:zinc ion binding"/>
    <property type="evidence" value="ECO:0007669"/>
    <property type="project" value="UniProtKB-UniRule"/>
</dbReference>
<dbReference type="GO" id="GO:0006146">
    <property type="term" value="P:adenine catabolic process"/>
    <property type="evidence" value="ECO:0007669"/>
    <property type="project" value="UniProtKB-UniRule"/>
</dbReference>
<dbReference type="GO" id="GO:0043103">
    <property type="term" value="P:hypoxanthine salvage"/>
    <property type="evidence" value="ECO:0007669"/>
    <property type="project" value="UniProtKB-UniRule"/>
</dbReference>
<dbReference type="GO" id="GO:0009117">
    <property type="term" value="P:nucleotide metabolic process"/>
    <property type="evidence" value="ECO:0007669"/>
    <property type="project" value="UniProtKB-KW"/>
</dbReference>
<dbReference type="CDD" id="cd01320">
    <property type="entry name" value="ADA"/>
    <property type="match status" value="1"/>
</dbReference>
<dbReference type="Gene3D" id="3.20.20.140">
    <property type="entry name" value="Metal-dependent hydrolases"/>
    <property type="match status" value="1"/>
</dbReference>
<dbReference type="HAMAP" id="MF_01962">
    <property type="entry name" value="Adenine_deaminase"/>
    <property type="match status" value="1"/>
</dbReference>
<dbReference type="InterPro" id="IPR001365">
    <property type="entry name" value="A_deaminase_dom"/>
</dbReference>
<dbReference type="InterPro" id="IPR028892">
    <property type="entry name" value="ADE"/>
</dbReference>
<dbReference type="InterPro" id="IPR006330">
    <property type="entry name" value="Ado/ade_deaminase"/>
</dbReference>
<dbReference type="InterPro" id="IPR032466">
    <property type="entry name" value="Metal_Hydrolase"/>
</dbReference>
<dbReference type="NCBIfam" id="TIGR01430">
    <property type="entry name" value="aden_deam"/>
    <property type="match status" value="1"/>
</dbReference>
<dbReference type="NCBIfam" id="NF006850">
    <property type="entry name" value="PRK09358.1-6"/>
    <property type="match status" value="1"/>
</dbReference>
<dbReference type="PANTHER" id="PTHR43114">
    <property type="entry name" value="ADENINE DEAMINASE"/>
    <property type="match status" value="1"/>
</dbReference>
<dbReference type="PANTHER" id="PTHR43114:SF6">
    <property type="entry name" value="ADENINE DEAMINASE"/>
    <property type="match status" value="1"/>
</dbReference>
<dbReference type="Pfam" id="PF00962">
    <property type="entry name" value="A_deaminase"/>
    <property type="match status" value="1"/>
</dbReference>
<dbReference type="SUPFAM" id="SSF51556">
    <property type="entry name" value="Metallo-dependent hydrolases"/>
    <property type="match status" value="1"/>
</dbReference>
<protein>
    <recommendedName>
        <fullName evidence="1">Adenine deaminase</fullName>
        <shortName evidence="1">ADE</shortName>
        <ecNumber evidence="1">3.5.4.2</ecNumber>
    </recommendedName>
    <alternativeName>
        <fullName evidence="1">Adenine aminohydrolase</fullName>
        <shortName evidence="1">AAH</shortName>
    </alternativeName>
</protein>
<gene>
    <name type="ordered locus">RSc2098</name>
    <name type="ORF">RS03663</name>
</gene>
<reference key="1">
    <citation type="journal article" date="2002" name="Nature">
        <title>Genome sequence of the plant pathogen Ralstonia solanacearum.</title>
        <authorList>
            <person name="Salanoubat M."/>
            <person name="Genin S."/>
            <person name="Artiguenave F."/>
            <person name="Gouzy J."/>
            <person name="Mangenot S."/>
            <person name="Arlat M."/>
            <person name="Billault A."/>
            <person name="Brottier P."/>
            <person name="Camus J.-C."/>
            <person name="Cattolico L."/>
            <person name="Chandler M."/>
            <person name="Choisne N."/>
            <person name="Claudel-Renard C."/>
            <person name="Cunnac S."/>
            <person name="Demange N."/>
            <person name="Gaspin C."/>
            <person name="Lavie M."/>
            <person name="Moisan A."/>
            <person name="Robert C."/>
            <person name="Saurin W."/>
            <person name="Schiex T."/>
            <person name="Siguier P."/>
            <person name="Thebault P."/>
            <person name="Whalen M."/>
            <person name="Wincker P."/>
            <person name="Levy M."/>
            <person name="Weissenbach J."/>
            <person name="Boucher C.A."/>
        </authorList>
    </citation>
    <scope>NUCLEOTIDE SEQUENCE [LARGE SCALE GENOMIC DNA]</scope>
    <source>
        <strain>ATCC BAA-1114 / GMI1000</strain>
    </source>
</reference>
<feature type="chain" id="PRO_0000194380" description="Adenine deaminase">
    <location>
        <begin position="1"/>
        <end position="345"/>
    </location>
</feature>
<feature type="active site" description="Proton donor" evidence="1">
    <location>
        <position position="207"/>
    </location>
</feature>
<feature type="binding site" evidence="1">
    <location>
        <position position="20"/>
    </location>
    <ligand>
        <name>Zn(2+)</name>
        <dbReference type="ChEBI" id="CHEBI:29105"/>
        <note>catalytic</note>
    </ligand>
</feature>
<feature type="binding site" evidence="1">
    <location>
        <position position="22"/>
    </location>
    <ligand>
        <name>Zn(2+)</name>
        <dbReference type="ChEBI" id="CHEBI:29105"/>
        <note>catalytic</note>
    </ligand>
</feature>
<feature type="binding site" evidence="1">
    <location>
        <position position="204"/>
    </location>
    <ligand>
        <name>Zn(2+)</name>
        <dbReference type="ChEBI" id="CHEBI:29105"/>
        <note>catalytic</note>
    </ligand>
</feature>
<feature type="binding site" evidence="1">
    <location>
        <position position="285"/>
    </location>
    <ligand>
        <name>Zn(2+)</name>
        <dbReference type="ChEBI" id="CHEBI:29105"/>
        <note>catalytic</note>
    </ligand>
</feature>
<feature type="binding site" evidence="1">
    <location>
        <position position="286"/>
    </location>
    <ligand>
        <name>substrate</name>
    </ligand>
</feature>
<feature type="site" description="Important for catalytic activity" evidence="1">
    <location>
        <position position="228"/>
    </location>
</feature>
<name>ADE_RALN1</name>
<evidence type="ECO:0000255" key="1">
    <source>
        <dbReference type="HAMAP-Rule" id="MF_01962"/>
    </source>
</evidence>
<comment type="function">
    <text evidence="1">Catalyzes the hydrolytic deamination of adenine to hypoxanthine. Plays an important role in the purine salvage pathway and in nitrogen catabolism.</text>
</comment>
<comment type="catalytic activity">
    <reaction evidence="1">
        <text>adenine + H2O + H(+) = hypoxanthine + NH4(+)</text>
        <dbReference type="Rhea" id="RHEA:23688"/>
        <dbReference type="ChEBI" id="CHEBI:15377"/>
        <dbReference type="ChEBI" id="CHEBI:15378"/>
        <dbReference type="ChEBI" id="CHEBI:16708"/>
        <dbReference type="ChEBI" id="CHEBI:17368"/>
        <dbReference type="ChEBI" id="CHEBI:28938"/>
        <dbReference type="EC" id="3.5.4.2"/>
    </reaction>
</comment>
<comment type="cofactor">
    <cofactor evidence="1">
        <name>Zn(2+)</name>
        <dbReference type="ChEBI" id="CHEBI:29105"/>
    </cofactor>
    <text evidence="1">Binds 1 zinc ion per subunit.</text>
</comment>
<comment type="similarity">
    <text evidence="1">Belongs to the metallo-dependent hydrolases superfamily. Adenosine and AMP deaminases family. Adenine deaminase type 2 subfamily.</text>
</comment>
<organism>
    <name type="scientific">Ralstonia nicotianae (strain ATCC BAA-1114 / GMI1000)</name>
    <name type="common">Ralstonia solanacearum</name>
    <dbReference type="NCBI Taxonomy" id="267608"/>
    <lineage>
        <taxon>Bacteria</taxon>
        <taxon>Pseudomonadati</taxon>
        <taxon>Pseudomonadota</taxon>
        <taxon>Betaproteobacteria</taxon>
        <taxon>Burkholderiales</taxon>
        <taxon>Burkholderiaceae</taxon>
        <taxon>Ralstonia</taxon>
        <taxon>Ralstonia solanacearum species complex</taxon>
    </lineage>
</organism>
<keyword id="KW-0378">Hydrolase</keyword>
<keyword id="KW-0479">Metal-binding</keyword>
<keyword id="KW-0546">Nucleotide metabolism</keyword>
<keyword id="KW-1185">Reference proteome</keyword>
<keyword id="KW-0862">Zinc</keyword>